<evidence type="ECO:0000269" key="1">
    <source>
    </source>
</evidence>
<evidence type="ECO:0000269" key="2">
    <source>
    </source>
</evidence>
<proteinExistence type="evidence at protein level"/>
<comment type="function">
    <text evidence="1">Antitoxin component of a type II toxin-antitoxin (TA) system. Upon expression in M.smegmatis neutralizes the effect of cognate toxin VapC3.</text>
</comment>
<comment type="induction">
    <text evidence="1 2">Induced during infection of mouse macrophages (PubMed:20011113). Induced in persister cells in response to D-cycloserine (PubMed:21673191).</text>
</comment>
<dbReference type="EMBL" id="AL123456">
    <property type="protein sequence ID" value="CCP43288.1"/>
    <property type="molecule type" value="Genomic_DNA"/>
</dbReference>
<dbReference type="PIR" id="A70548">
    <property type="entry name" value="A70548"/>
</dbReference>
<dbReference type="RefSeq" id="NP_215064.1">
    <property type="nucleotide sequence ID" value="NC_000962.3"/>
</dbReference>
<dbReference type="RefSeq" id="WP_003402915.1">
    <property type="nucleotide sequence ID" value="NZ_NVQJ01000036.1"/>
</dbReference>
<dbReference type="STRING" id="83332.Rv0550c"/>
<dbReference type="PaxDb" id="83332-Rv0550c"/>
<dbReference type="DNASU" id="887515"/>
<dbReference type="GeneID" id="887515"/>
<dbReference type="KEGG" id="mtu:Rv0550c"/>
<dbReference type="KEGG" id="mtv:RVBD_0550c"/>
<dbReference type="TubercuList" id="Rv0550c"/>
<dbReference type="eggNOG" id="ENOG503363Q">
    <property type="taxonomic scope" value="Bacteria"/>
</dbReference>
<dbReference type="InParanoid" id="P9WJ59"/>
<dbReference type="OrthoDB" id="3290891at2"/>
<dbReference type="Proteomes" id="UP000001584">
    <property type="component" value="Chromosome"/>
</dbReference>
<dbReference type="GO" id="GO:0045926">
    <property type="term" value="P:negative regulation of growth"/>
    <property type="evidence" value="ECO:0000315"/>
    <property type="project" value="MTBBASE"/>
</dbReference>
<dbReference type="GO" id="GO:0075136">
    <property type="term" value="P:response to host"/>
    <property type="evidence" value="ECO:0000270"/>
    <property type="project" value="MTBBASE"/>
</dbReference>
<dbReference type="InterPro" id="IPR009956">
    <property type="entry name" value="Post-segregation_anti-tox_CcdA"/>
</dbReference>
<dbReference type="Pfam" id="PF07362">
    <property type="entry name" value="CcdA"/>
    <property type="match status" value="1"/>
</dbReference>
<reference key="1">
    <citation type="journal article" date="1998" name="Nature">
        <title>Deciphering the biology of Mycobacterium tuberculosis from the complete genome sequence.</title>
        <authorList>
            <person name="Cole S.T."/>
            <person name="Brosch R."/>
            <person name="Parkhill J."/>
            <person name="Garnier T."/>
            <person name="Churcher C.M."/>
            <person name="Harris D.E."/>
            <person name="Gordon S.V."/>
            <person name="Eiglmeier K."/>
            <person name="Gas S."/>
            <person name="Barry C.E. III"/>
            <person name="Tekaia F."/>
            <person name="Badcock K."/>
            <person name="Basham D."/>
            <person name="Brown D."/>
            <person name="Chillingworth T."/>
            <person name="Connor R."/>
            <person name="Davies R.M."/>
            <person name="Devlin K."/>
            <person name="Feltwell T."/>
            <person name="Gentles S."/>
            <person name="Hamlin N."/>
            <person name="Holroyd S."/>
            <person name="Hornsby T."/>
            <person name="Jagels K."/>
            <person name="Krogh A."/>
            <person name="McLean J."/>
            <person name="Moule S."/>
            <person name="Murphy L.D."/>
            <person name="Oliver S."/>
            <person name="Osborne J."/>
            <person name="Quail M.A."/>
            <person name="Rajandream M.A."/>
            <person name="Rogers J."/>
            <person name="Rutter S."/>
            <person name="Seeger K."/>
            <person name="Skelton S."/>
            <person name="Squares S."/>
            <person name="Squares R."/>
            <person name="Sulston J.E."/>
            <person name="Taylor K."/>
            <person name="Whitehead S."/>
            <person name="Barrell B.G."/>
        </authorList>
    </citation>
    <scope>NUCLEOTIDE SEQUENCE [LARGE SCALE GENOMIC DNA]</scope>
    <source>
        <strain>ATCC 25618 / H37Rv</strain>
    </source>
</reference>
<reference key="2">
    <citation type="journal article" date="2005" name="Nucleic Acids Res.">
        <title>Toxin-antitoxin loci are highly abundant in free-living but lost from host-associated prokaryotes.</title>
        <authorList>
            <person name="Pandey D.P."/>
            <person name="Gerdes K."/>
        </authorList>
    </citation>
    <scope>POSSIBLE FUNCTION</scope>
    <source>
        <strain>ATCC 25618 / H37Rv</strain>
    </source>
</reference>
<reference key="3">
    <citation type="journal article" date="2009" name="PLoS Genet.">
        <title>Comprehensive functional analysis of Mycobacterium tuberculosis toxin-antitoxin systems: implications for pathogenesis, stress responses, and evolution.</title>
        <authorList>
            <person name="Ramage H.R."/>
            <person name="Connolly L.E."/>
            <person name="Cox J.S."/>
        </authorList>
    </citation>
    <scope>EXPRESSION IN M.SMEGMATIS</scope>
    <scope>FUNCTION AS AN ANTITOXIN</scope>
    <scope>INDUCTION DURING MACROPHAGE INFECTION</scope>
    <source>
        <strain>ATCC 35801 / TMC 107 / Erdman</strain>
    </source>
</reference>
<reference key="4">
    <citation type="journal article" date="2011" name="MBio">
        <title>Characterization and transcriptome analysis of Mycobacterium tuberculosis persisters.</title>
        <authorList>
            <person name="Keren I."/>
            <person name="Minami S."/>
            <person name="Rubin E."/>
            <person name="Lewis K."/>
        </authorList>
    </citation>
    <scope>INDUCTION IN PERSISTER CELLS</scope>
    <source>
        <strain>ATCC 25618 / H37Rv</strain>
    </source>
</reference>
<reference key="5">
    <citation type="journal article" date="2011" name="Mol. Cell. Proteomics">
        <title>Proteogenomic analysis of Mycobacterium tuberculosis by high resolution mass spectrometry.</title>
        <authorList>
            <person name="Kelkar D.S."/>
            <person name="Kumar D."/>
            <person name="Kumar P."/>
            <person name="Balakrishnan L."/>
            <person name="Muthusamy B."/>
            <person name="Yadav A.K."/>
            <person name="Shrivastava P."/>
            <person name="Marimuthu A."/>
            <person name="Anand S."/>
            <person name="Sundaram H."/>
            <person name="Kingsbury R."/>
            <person name="Harsha H.C."/>
            <person name="Nair B."/>
            <person name="Prasad T.S."/>
            <person name="Chauhan D.S."/>
            <person name="Katoch K."/>
            <person name="Katoch V.M."/>
            <person name="Kumar P."/>
            <person name="Chaerkady R."/>
            <person name="Ramachandran S."/>
            <person name="Dash D."/>
            <person name="Pandey A."/>
        </authorList>
    </citation>
    <scope>IDENTIFICATION BY MASS SPECTROMETRY [LARGE SCALE ANALYSIS]</scope>
    <source>
        <strain>ATCC 25618 / H37Rv</strain>
    </source>
</reference>
<organism>
    <name type="scientific">Mycobacterium tuberculosis (strain ATCC 25618 / H37Rv)</name>
    <dbReference type="NCBI Taxonomy" id="83332"/>
    <lineage>
        <taxon>Bacteria</taxon>
        <taxon>Bacillati</taxon>
        <taxon>Actinomycetota</taxon>
        <taxon>Actinomycetes</taxon>
        <taxon>Mycobacteriales</taxon>
        <taxon>Mycobacteriaceae</taxon>
        <taxon>Mycobacterium</taxon>
        <taxon>Mycobacterium tuberculosis complex</taxon>
    </lineage>
</organism>
<gene>
    <name type="primary">vapB3</name>
    <name type="ordered locus">Rv0550c</name>
</gene>
<sequence length="88" mass="9544">MLSRRTKTIVVCTLVCMARLNVYVPDELAERARARGLNVSALTQAAISAELENSATDAWLEGLEPRSTGARHDDVLGAIDAARDEFEA</sequence>
<accession>P9WJ59</accession>
<accession>L0T6U4</accession>
<accession>O06416</accession>
<accession>Q7D9N5</accession>
<keyword id="KW-1185">Reference proteome</keyword>
<keyword id="KW-1277">Toxin-antitoxin system</keyword>
<protein>
    <recommendedName>
        <fullName>Antitoxin VapB3</fullName>
    </recommendedName>
</protein>
<name>VAPB3_MYCTU</name>
<feature type="chain" id="PRO_0000408053" description="Antitoxin VapB3">
    <location>
        <begin position="1"/>
        <end position="88"/>
    </location>
</feature>